<name>RIMP_DESDA</name>
<sequence>MTDNALRETIIRLAQPVVHTLGLVIWGVETARAGRTIVRLFVDVPTIPQRPGMPEGSEEPSSAITAPAPAHDPQESSGAEAPAAPTSATIEQCEEISRHLALALEVEDSIADAYVLEVSTPGLSRLFFSLEQMIPYVGDVVEARLHTPVASTDPAAHGGPRRVWRGTLVAVEDDAFVLAPVTVSPEGEVEDENQPPVRLPWEAVRRATRMYIFKKPQKPGKKPGKPQGKEVPKGGSGSTAPKKAAAKKKAGRTAAEND</sequence>
<gene>
    <name evidence="1" type="primary">rimP</name>
    <name type="ordered locus">Ddes_0062</name>
</gene>
<reference key="1">
    <citation type="submission" date="2009-01" db="EMBL/GenBank/DDBJ databases">
        <title>Complete sequence of Desulfovibrio desulfuricans subsp. desulfuricans str. ATCC 27774.</title>
        <authorList>
            <consortium name="US DOE Joint Genome Institute"/>
            <person name="Lucas S."/>
            <person name="Copeland A."/>
            <person name="Lapidus A."/>
            <person name="Glavina del Rio T."/>
            <person name="Tice H."/>
            <person name="Bruce D."/>
            <person name="Goodwin L."/>
            <person name="Pitluck S."/>
            <person name="Sims D."/>
            <person name="Lu M."/>
            <person name="Kiss H."/>
            <person name="Meineke L."/>
            <person name="Brettin T."/>
            <person name="Detter J.C."/>
            <person name="Han C."/>
            <person name="Larimer F."/>
            <person name="Land M."/>
            <person name="Hauser L."/>
            <person name="Kyrpides N."/>
            <person name="Ovchinnikova G."/>
            <person name="Hazen T.C."/>
        </authorList>
    </citation>
    <scope>NUCLEOTIDE SEQUENCE [LARGE SCALE GENOMIC DNA]</scope>
    <source>
        <strain>ATCC 27774 / DSM 6949 / MB</strain>
    </source>
</reference>
<keyword id="KW-0963">Cytoplasm</keyword>
<keyword id="KW-0690">Ribosome biogenesis</keyword>
<comment type="function">
    <text evidence="1">Required for maturation of 30S ribosomal subunits.</text>
</comment>
<comment type="subcellular location">
    <subcellularLocation>
        <location evidence="1">Cytoplasm</location>
    </subcellularLocation>
</comment>
<comment type="similarity">
    <text evidence="1">Belongs to the RimP family.</text>
</comment>
<proteinExistence type="inferred from homology"/>
<dbReference type="EMBL" id="CP001358">
    <property type="protein sequence ID" value="ACL47982.1"/>
    <property type="molecule type" value="Genomic_DNA"/>
</dbReference>
<dbReference type="SMR" id="B8J1Y7"/>
<dbReference type="STRING" id="525146.Ddes_0062"/>
<dbReference type="KEGG" id="dds:Ddes_0062"/>
<dbReference type="eggNOG" id="COG0779">
    <property type="taxonomic scope" value="Bacteria"/>
</dbReference>
<dbReference type="HOGENOM" id="CLU_070525_1_1_7"/>
<dbReference type="GO" id="GO:0005829">
    <property type="term" value="C:cytosol"/>
    <property type="evidence" value="ECO:0007669"/>
    <property type="project" value="TreeGrafter"/>
</dbReference>
<dbReference type="GO" id="GO:0000028">
    <property type="term" value="P:ribosomal small subunit assembly"/>
    <property type="evidence" value="ECO:0007669"/>
    <property type="project" value="TreeGrafter"/>
</dbReference>
<dbReference type="GO" id="GO:0006412">
    <property type="term" value="P:translation"/>
    <property type="evidence" value="ECO:0007669"/>
    <property type="project" value="TreeGrafter"/>
</dbReference>
<dbReference type="Gene3D" id="3.30.300.70">
    <property type="entry name" value="RimP-like superfamily, N-terminal"/>
    <property type="match status" value="1"/>
</dbReference>
<dbReference type="HAMAP" id="MF_01077">
    <property type="entry name" value="RimP"/>
    <property type="match status" value="1"/>
</dbReference>
<dbReference type="InterPro" id="IPR003728">
    <property type="entry name" value="Ribosome_maturation_RimP"/>
</dbReference>
<dbReference type="InterPro" id="IPR028989">
    <property type="entry name" value="RimP_N"/>
</dbReference>
<dbReference type="InterPro" id="IPR035956">
    <property type="entry name" value="RimP_N_sf"/>
</dbReference>
<dbReference type="PANTHER" id="PTHR33867">
    <property type="entry name" value="RIBOSOME MATURATION FACTOR RIMP"/>
    <property type="match status" value="1"/>
</dbReference>
<dbReference type="PANTHER" id="PTHR33867:SF1">
    <property type="entry name" value="RIBOSOME MATURATION FACTOR RIMP"/>
    <property type="match status" value="1"/>
</dbReference>
<dbReference type="Pfam" id="PF02576">
    <property type="entry name" value="RimP_N"/>
    <property type="match status" value="1"/>
</dbReference>
<dbReference type="SUPFAM" id="SSF75420">
    <property type="entry name" value="YhbC-like, N-terminal domain"/>
    <property type="match status" value="1"/>
</dbReference>
<accession>B8J1Y7</accession>
<protein>
    <recommendedName>
        <fullName evidence="1">Ribosome maturation factor RimP</fullName>
    </recommendedName>
</protein>
<feature type="chain" id="PRO_1000149791" description="Ribosome maturation factor RimP">
    <location>
        <begin position="1"/>
        <end position="258"/>
    </location>
</feature>
<feature type="region of interest" description="Disordered" evidence="2">
    <location>
        <begin position="48"/>
        <end position="88"/>
    </location>
</feature>
<feature type="region of interest" description="Disordered" evidence="2">
    <location>
        <begin position="212"/>
        <end position="258"/>
    </location>
</feature>
<feature type="compositionally biased region" description="Basic residues" evidence="2">
    <location>
        <begin position="215"/>
        <end position="224"/>
    </location>
</feature>
<evidence type="ECO:0000255" key="1">
    <source>
        <dbReference type="HAMAP-Rule" id="MF_01077"/>
    </source>
</evidence>
<evidence type="ECO:0000256" key="2">
    <source>
        <dbReference type="SAM" id="MobiDB-lite"/>
    </source>
</evidence>
<organism>
    <name type="scientific">Desulfovibrio desulfuricans (strain ATCC 27774 / DSM 6949 / MB)</name>
    <dbReference type="NCBI Taxonomy" id="525146"/>
    <lineage>
        <taxon>Bacteria</taxon>
        <taxon>Pseudomonadati</taxon>
        <taxon>Thermodesulfobacteriota</taxon>
        <taxon>Desulfovibrionia</taxon>
        <taxon>Desulfovibrionales</taxon>
        <taxon>Desulfovibrionaceae</taxon>
        <taxon>Desulfovibrio</taxon>
    </lineage>
</organism>